<dbReference type="EC" id="7.6.2.-" evidence="1"/>
<dbReference type="EMBL" id="CP000308">
    <property type="protein sequence ID" value="ABG15964.1"/>
    <property type="molecule type" value="Genomic_DNA"/>
</dbReference>
<dbReference type="RefSeq" id="WP_002209058.1">
    <property type="nucleotide sequence ID" value="NZ_CP009906.1"/>
</dbReference>
<dbReference type="SMR" id="Q1C0Q8"/>
<dbReference type="KEGG" id="ypa:YPA_4003"/>
<dbReference type="Proteomes" id="UP000001971">
    <property type="component" value="Chromosome"/>
</dbReference>
<dbReference type="GO" id="GO:0005886">
    <property type="term" value="C:plasma membrane"/>
    <property type="evidence" value="ECO:0007669"/>
    <property type="project" value="UniProtKB-SubCell"/>
</dbReference>
<dbReference type="GO" id="GO:0005524">
    <property type="term" value="F:ATP binding"/>
    <property type="evidence" value="ECO:0007669"/>
    <property type="project" value="UniProtKB-KW"/>
</dbReference>
<dbReference type="GO" id="GO:0016887">
    <property type="term" value="F:ATP hydrolysis activity"/>
    <property type="evidence" value="ECO:0007669"/>
    <property type="project" value="InterPro"/>
</dbReference>
<dbReference type="CDD" id="cd03214">
    <property type="entry name" value="ABC_Iron-Siderophores_B12_Hemin"/>
    <property type="match status" value="1"/>
</dbReference>
<dbReference type="FunFam" id="3.40.50.300:FF:000134">
    <property type="entry name" value="Iron-enterobactin ABC transporter ATP-binding protein"/>
    <property type="match status" value="1"/>
</dbReference>
<dbReference type="Gene3D" id="3.40.50.300">
    <property type="entry name" value="P-loop containing nucleotide triphosphate hydrolases"/>
    <property type="match status" value="1"/>
</dbReference>
<dbReference type="InterPro" id="IPR003593">
    <property type="entry name" value="AAA+_ATPase"/>
</dbReference>
<dbReference type="InterPro" id="IPR003439">
    <property type="entry name" value="ABC_transporter-like_ATP-bd"/>
</dbReference>
<dbReference type="InterPro" id="IPR017871">
    <property type="entry name" value="ABC_transporter-like_CS"/>
</dbReference>
<dbReference type="InterPro" id="IPR027417">
    <property type="entry name" value="P-loop_NTPase"/>
</dbReference>
<dbReference type="NCBIfam" id="NF010068">
    <property type="entry name" value="PRK13548.1"/>
    <property type="match status" value="1"/>
</dbReference>
<dbReference type="PANTHER" id="PTHR42794">
    <property type="entry name" value="HEMIN IMPORT ATP-BINDING PROTEIN HMUV"/>
    <property type="match status" value="1"/>
</dbReference>
<dbReference type="PANTHER" id="PTHR42794:SF1">
    <property type="entry name" value="HEMIN IMPORT ATP-BINDING PROTEIN HMUV"/>
    <property type="match status" value="1"/>
</dbReference>
<dbReference type="Pfam" id="PF00005">
    <property type="entry name" value="ABC_tran"/>
    <property type="match status" value="1"/>
</dbReference>
<dbReference type="SMART" id="SM00382">
    <property type="entry name" value="AAA"/>
    <property type="match status" value="1"/>
</dbReference>
<dbReference type="SUPFAM" id="SSF52540">
    <property type="entry name" value="P-loop containing nucleoside triphosphate hydrolases"/>
    <property type="match status" value="1"/>
</dbReference>
<dbReference type="PROSITE" id="PS00211">
    <property type="entry name" value="ABC_TRANSPORTER_1"/>
    <property type="match status" value="1"/>
</dbReference>
<dbReference type="PROSITE" id="PS50893">
    <property type="entry name" value="ABC_TRANSPORTER_2"/>
    <property type="match status" value="1"/>
</dbReference>
<dbReference type="PROSITE" id="PS51261">
    <property type="entry name" value="HMUV"/>
    <property type="match status" value="1"/>
</dbReference>
<accession>Q1C0Q8</accession>
<organism>
    <name type="scientific">Yersinia pestis bv. Antiqua (strain Antiqua)</name>
    <dbReference type="NCBI Taxonomy" id="360102"/>
    <lineage>
        <taxon>Bacteria</taxon>
        <taxon>Pseudomonadati</taxon>
        <taxon>Pseudomonadota</taxon>
        <taxon>Gammaproteobacteria</taxon>
        <taxon>Enterobacterales</taxon>
        <taxon>Yersiniaceae</taxon>
        <taxon>Yersinia</taxon>
    </lineage>
</organism>
<gene>
    <name evidence="1" type="primary">hmuV</name>
    <name type="ordered locus">YPA_4003</name>
</gene>
<keyword id="KW-0067">ATP-binding</keyword>
<keyword id="KW-0997">Cell inner membrane</keyword>
<keyword id="KW-1003">Cell membrane</keyword>
<keyword id="KW-0472">Membrane</keyword>
<keyword id="KW-0547">Nucleotide-binding</keyword>
<keyword id="KW-1278">Translocase</keyword>
<keyword id="KW-0813">Transport</keyword>
<feature type="chain" id="PRO_0000269641" description="Hemin import ATP-binding protein HmuV">
    <location>
        <begin position="1"/>
        <end position="266"/>
    </location>
</feature>
<feature type="domain" description="ABC transporter" evidence="1">
    <location>
        <begin position="12"/>
        <end position="248"/>
    </location>
</feature>
<feature type="binding site" evidence="1">
    <location>
        <begin position="44"/>
        <end position="51"/>
    </location>
    <ligand>
        <name>ATP</name>
        <dbReference type="ChEBI" id="CHEBI:30616"/>
    </ligand>
</feature>
<evidence type="ECO:0000255" key="1">
    <source>
        <dbReference type="HAMAP-Rule" id="MF_01718"/>
    </source>
</evidence>
<comment type="function">
    <text evidence="1">Part of the ABC transporter complex HmuTUV involved in hemin import. Responsible for energy coupling to the transport system.</text>
</comment>
<comment type="subunit">
    <text evidence="1">The complex is composed of two ATP-binding proteins (HmuV), two transmembrane proteins (HmuU) and a solute-binding protein (HmuT).</text>
</comment>
<comment type="subcellular location">
    <subcellularLocation>
        <location evidence="1">Cell inner membrane</location>
        <topology evidence="1">Peripheral membrane protein</topology>
    </subcellularLocation>
</comment>
<comment type="similarity">
    <text evidence="1">Belongs to the ABC transporter superfamily. Heme (hemin) importer (TC 3.A.1.14.5) family.</text>
</comment>
<reference key="1">
    <citation type="journal article" date="2006" name="J. Bacteriol.">
        <title>Complete genome sequence of Yersinia pestis strains Antiqua and Nepal516: evidence of gene reduction in an emerging pathogen.</title>
        <authorList>
            <person name="Chain P.S.G."/>
            <person name="Hu P."/>
            <person name="Malfatti S.A."/>
            <person name="Radnedge L."/>
            <person name="Larimer F."/>
            <person name="Vergez L.M."/>
            <person name="Worsham P."/>
            <person name="Chu M.C."/>
            <person name="Andersen G.L."/>
        </authorList>
    </citation>
    <scope>NUCLEOTIDE SEQUENCE [LARGE SCALE GENOMIC DNA]</scope>
    <source>
        <strain>Antiqua</strain>
    </source>
</reference>
<protein>
    <recommendedName>
        <fullName evidence="1">Hemin import ATP-binding protein HmuV</fullName>
        <ecNumber evidence="1">7.6.2.-</ecNumber>
    </recommendedName>
</protein>
<proteinExistence type="inferred from homology"/>
<sequence length="266" mass="29658">MVDMAVTPVALLEASHLHYHVQQQALINDVSLHIASGEMVAIIGPNGAGKSTLLRLLTGYLSPSHGECHLLGQNLNSWQPKALARTRAVMRQYSELAFPFSVSEVIQMGRAPYGGSQDRQALQQVMAQTDCLALAQRDYRVLSGGEQQRVQLARVLAQLWQPQPTPRWLFLDEPTSALDLYHQQHTLRLLRQLTRQEPLAVCCVLHDLNLAALYADRIMLLAQGKLVACGTPEEVLNAETLTQWYQADLGVSRHPESALPQIYLRQ</sequence>
<name>HMUV_YERPA</name>